<comment type="function">
    <text evidence="7 8">Plays a significant role in maintaining keratin filament organization in intestinal epithelia. When phosphorylated, plays a role in the secretion of mucin in the small intestine.</text>
</comment>
<comment type="subunit">
    <text evidence="7 10">Heterotetramer of two type I and two type II keratins. Associates with KRT8.</text>
</comment>
<comment type="tissue specificity">
    <text evidence="7 8">Expressed at low levels in the more differentiated suprabasal regions of the small intestine, and at higher levels in the colon, mainly in the upper region and in scattered cells throughout the remaining epithelium. Also expressed in epithelial cells of bladder, ileum and stomach and at lower levels in pancreas and earskin. The phosphorylated form is nearly exclusively expressed in goblet cells of the small intestine and in the lumen-proximal cells of the colon (at protein level). Also expressed in jejunum and duodenum.</text>
</comment>
<comment type="PTM">
    <text evidence="3 8 9">Hyperphosphorylation at Ser-13 occurs during the early stages of apoptosis but becomes less prominent during the later stages (By similarity). Phosphorylation at Ser-13 also increases in response to stress brought on by cell injury.</text>
</comment>
<comment type="PTM">
    <text evidence="3">Proteolytically cleaved by caspases during apoptosis. Cleavage occurs at Asp-235 (By similarity).</text>
</comment>
<comment type="miscellaneous">
    <text evidence="10">There are two types of cytoskeletal and microfibrillar keratin: I (acidic; 40-55 kDa) and II (neutral to basic; 56-70 kDa).</text>
</comment>
<comment type="similarity">
    <text evidence="5">Belongs to the intermediate filament family.</text>
</comment>
<feature type="chain" id="PRO_0000308358" description="Keratin, type I cytoskeletal 20">
    <location>
        <begin position="1"/>
        <end position="431"/>
    </location>
</feature>
<feature type="domain" description="IF rod" evidence="5">
    <location>
        <begin position="77"/>
        <end position="388"/>
    </location>
</feature>
<feature type="region of interest" description="Head" evidence="4">
    <location>
        <begin position="1"/>
        <end position="76"/>
    </location>
</feature>
<feature type="region of interest" description="Disordered" evidence="6">
    <location>
        <begin position="1"/>
        <end position="23"/>
    </location>
</feature>
<feature type="region of interest" description="Coil 1A" evidence="4">
    <location>
        <begin position="77"/>
        <end position="112"/>
    </location>
</feature>
<feature type="region of interest" description="Linker 1" evidence="4">
    <location>
        <begin position="113"/>
        <end position="130"/>
    </location>
</feature>
<feature type="region of interest" description="Coil 1B" evidence="4">
    <location>
        <begin position="131"/>
        <end position="222"/>
    </location>
</feature>
<feature type="region of interest" description="Linker 12" evidence="4">
    <location>
        <begin position="223"/>
        <end position="245"/>
    </location>
</feature>
<feature type="region of interest" description="Coil 2" evidence="4">
    <location>
        <begin position="246"/>
        <end position="384"/>
    </location>
</feature>
<feature type="region of interest" description="Tail" evidence="4">
    <location>
        <begin position="385"/>
        <end position="431"/>
    </location>
</feature>
<feature type="site" description="Cleavage; by caspases" evidence="1">
    <location>
        <begin position="235"/>
        <end position="236"/>
    </location>
</feature>
<feature type="modified residue" description="Phosphoserine; by MAPKAPK2, MAPKAPK3 and PKC" evidence="8 9">
    <location>
        <position position="13"/>
    </location>
</feature>
<feature type="modified residue" description="Phosphoserine" evidence="16">
    <location>
        <position position="16"/>
    </location>
</feature>
<feature type="modified residue" description="Phosphoserine" evidence="2">
    <location>
        <position position="26"/>
    </location>
</feature>
<feature type="sequence conflict" description="In Ref. 4; AAH57172." evidence="10" ref="4">
    <original>S</original>
    <variation>N</variation>
    <location>
        <position position="24"/>
    </location>
</feature>
<feature type="sequence conflict" description="In Ref. 4; AAH57172." evidence="10" ref="4">
    <original>R</original>
    <variation>Q</variation>
    <location>
        <position position="151"/>
    </location>
</feature>
<feature type="sequence conflict" description="In Ref. 4; AAH57172." evidence="10" ref="4">
    <original>R</original>
    <variation>H</variation>
    <location>
        <position position="173"/>
    </location>
</feature>
<dbReference type="EMBL" id="AF473907">
    <property type="protein sequence ID" value="AAL82480.1"/>
    <property type="molecule type" value="mRNA"/>
</dbReference>
<dbReference type="EMBL" id="AK018567">
    <property type="protein sequence ID" value="BAB31280.1"/>
    <property type="molecule type" value="mRNA"/>
</dbReference>
<dbReference type="EMBL" id="AL591165">
    <property type="protein sequence ID" value="CAM21365.1"/>
    <property type="molecule type" value="Genomic_DNA"/>
</dbReference>
<dbReference type="EMBL" id="BC057172">
    <property type="protein sequence ID" value="AAH57172.1"/>
    <property type="molecule type" value="mRNA"/>
</dbReference>
<dbReference type="CCDS" id="CCDS25381.1"/>
<dbReference type="RefSeq" id="NP_075745.1">
    <property type="nucleotide sequence ID" value="NM_023256.2"/>
</dbReference>
<dbReference type="SMR" id="Q9D312"/>
<dbReference type="BioGRID" id="211731">
    <property type="interactions" value="1"/>
</dbReference>
<dbReference type="FunCoup" id="Q9D312">
    <property type="interactions" value="153"/>
</dbReference>
<dbReference type="STRING" id="10090.ENSMUSP00000017743"/>
<dbReference type="iPTMnet" id="Q9D312"/>
<dbReference type="PhosphoSitePlus" id="Q9D312"/>
<dbReference type="jPOST" id="Q9D312"/>
<dbReference type="PaxDb" id="10090-ENSMUSP00000017743"/>
<dbReference type="PeptideAtlas" id="Q9D312"/>
<dbReference type="ProteomicsDB" id="269050"/>
<dbReference type="Antibodypedia" id="3502">
    <property type="antibodies" value="1520 antibodies from 52 providers"/>
</dbReference>
<dbReference type="DNASU" id="66809"/>
<dbReference type="Ensembl" id="ENSMUST00000017743.3">
    <property type="protein sequence ID" value="ENSMUSP00000017743.3"/>
    <property type="gene ID" value="ENSMUSG00000035775.3"/>
</dbReference>
<dbReference type="GeneID" id="66809"/>
<dbReference type="KEGG" id="mmu:66809"/>
<dbReference type="UCSC" id="uc007liu.1">
    <property type="organism name" value="mouse"/>
</dbReference>
<dbReference type="AGR" id="MGI:1914059"/>
<dbReference type="CTD" id="54474"/>
<dbReference type="MGI" id="MGI:1914059">
    <property type="gene designation" value="Krt20"/>
</dbReference>
<dbReference type="VEuPathDB" id="HostDB:ENSMUSG00000035775"/>
<dbReference type="eggNOG" id="ENOG502QUY3">
    <property type="taxonomic scope" value="Eukaryota"/>
</dbReference>
<dbReference type="GeneTree" id="ENSGT00940000161855"/>
<dbReference type="HOGENOM" id="CLU_012560_8_1_1"/>
<dbReference type="InParanoid" id="Q9D312"/>
<dbReference type="OMA" id="LGTIMNE"/>
<dbReference type="OrthoDB" id="2441647at2759"/>
<dbReference type="PhylomeDB" id="Q9D312"/>
<dbReference type="TreeFam" id="TF332742"/>
<dbReference type="Reactome" id="R-MMU-6805567">
    <property type="pathway name" value="Keratinization"/>
</dbReference>
<dbReference type="Reactome" id="R-MMU-6809371">
    <property type="pathway name" value="Formation of the cornified envelope"/>
</dbReference>
<dbReference type="BioGRID-ORCS" id="66809">
    <property type="hits" value="4 hits in 78 CRISPR screens"/>
</dbReference>
<dbReference type="ChiTaRS" id="Krt20">
    <property type="organism name" value="mouse"/>
</dbReference>
<dbReference type="PRO" id="PR:Q9D312"/>
<dbReference type="Proteomes" id="UP000000589">
    <property type="component" value="Chromosome 11"/>
</dbReference>
<dbReference type="RNAct" id="Q9D312">
    <property type="molecule type" value="protein"/>
</dbReference>
<dbReference type="Bgee" id="ENSMUSG00000035775">
    <property type="expression patterns" value="Expressed in small intestine Peyer's patch and 87 other cell types or tissues"/>
</dbReference>
<dbReference type="GO" id="GO:0005829">
    <property type="term" value="C:cytosol"/>
    <property type="evidence" value="ECO:0007669"/>
    <property type="project" value="Ensembl"/>
</dbReference>
<dbReference type="GO" id="GO:0005882">
    <property type="term" value="C:intermediate filament"/>
    <property type="evidence" value="ECO:0007669"/>
    <property type="project" value="UniProtKB-KW"/>
</dbReference>
<dbReference type="GO" id="GO:0005198">
    <property type="term" value="F:structural molecule activity"/>
    <property type="evidence" value="ECO:0007669"/>
    <property type="project" value="InterPro"/>
</dbReference>
<dbReference type="GO" id="GO:0006915">
    <property type="term" value="P:apoptotic process"/>
    <property type="evidence" value="ECO:0007669"/>
    <property type="project" value="UniProtKB-KW"/>
</dbReference>
<dbReference type="GO" id="GO:0009267">
    <property type="term" value="P:cellular response to starvation"/>
    <property type="evidence" value="ECO:0000314"/>
    <property type="project" value="UniProtKB"/>
</dbReference>
<dbReference type="GO" id="GO:0045109">
    <property type="term" value="P:intermediate filament organization"/>
    <property type="evidence" value="ECO:0000315"/>
    <property type="project" value="UniProtKB"/>
</dbReference>
<dbReference type="GO" id="GO:0050708">
    <property type="term" value="P:regulation of protein secretion"/>
    <property type="evidence" value="ECO:0000314"/>
    <property type="project" value="UniProtKB"/>
</dbReference>
<dbReference type="FunFam" id="1.20.5.1160:FF:000002">
    <property type="entry name" value="Type I keratin 10"/>
    <property type="match status" value="1"/>
</dbReference>
<dbReference type="FunFam" id="1.20.5.170:FF:000002">
    <property type="entry name" value="Type I keratin KA11"/>
    <property type="match status" value="1"/>
</dbReference>
<dbReference type="FunFam" id="1.20.5.500:FF:000001">
    <property type="entry name" value="Type II keratin 23"/>
    <property type="match status" value="1"/>
</dbReference>
<dbReference type="Gene3D" id="1.20.5.170">
    <property type="match status" value="1"/>
</dbReference>
<dbReference type="Gene3D" id="1.20.5.500">
    <property type="entry name" value="Single helix bin"/>
    <property type="match status" value="1"/>
</dbReference>
<dbReference type="Gene3D" id="1.20.5.1160">
    <property type="entry name" value="Vasodilator-stimulated phosphoprotein"/>
    <property type="match status" value="1"/>
</dbReference>
<dbReference type="InterPro" id="IPR018039">
    <property type="entry name" value="IF_conserved"/>
</dbReference>
<dbReference type="InterPro" id="IPR039008">
    <property type="entry name" value="IF_rod_dom"/>
</dbReference>
<dbReference type="InterPro" id="IPR002957">
    <property type="entry name" value="Keratin_I"/>
</dbReference>
<dbReference type="PANTHER" id="PTHR23239">
    <property type="entry name" value="INTERMEDIATE FILAMENT"/>
    <property type="match status" value="1"/>
</dbReference>
<dbReference type="PANTHER" id="PTHR23239:SF167">
    <property type="entry name" value="KERATIN, TYPE I CYTOSKELETAL 20"/>
    <property type="match status" value="1"/>
</dbReference>
<dbReference type="Pfam" id="PF00038">
    <property type="entry name" value="Filament"/>
    <property type="match status" value="1"/>
</dbReference>
<dbReference type="PRINTS" id="PR01248">
    <property type="entry name" value="TYPE1KERATIN"/>
</dbReference>
<dbReference type="SMART" id="SM01391">
    <property type="entry name" value="Filament"/>
    <property type="match status" value="1"/>
</dbReference>
<dbReference type="SUPFAM" id="SSF64593">
    <property type="entry name" value="Intermediate filament protein, coiled coil region"/>
    <property type="match status" value="2"/>
</dbReference>
<dbReference type="PROSITE" id="PS00226">
    <property type="entry name" value="IF_ROD_1"/>
    <property type="match status" value="1"/>
</dbReference>
<dbReference type="PROSITE" id="PS51842">
    <property type="entry name" value="IF_ROD_2"/>
    <property type="match status" value="1"/>
</dbReference>
<evidence type="ECO:0000250" key="1"/>
<evidence type="ECO:0000250" key="2">
    <source>
        <dbReference type="UniProtKB" id="P25030"/>
    </source>
</evidence>
<evidence type="ECO:0000250" key="3">
    <source>
        <dbReference type="UniProtKB" id="P35900"/>
    </source>
</evidence>
<evidence type="ECO:0000255" key="4"/>
<evidence type="ECO:0000255" key="5">
    <source>
        <dbReference type="PROSITE-ProRule" id="PRU01188"/>
    </source>
</evidence>
<evidence type="ECO:0000256" key="6">
    <source>
        <dbReference type="SAM" id="MobiDB-lite"/>
    </source>
</evidence>
<evidence type="ECO:0000269" key="7">
    <source>
    </source>
</evidence>
<evidence type="ECO:0000269" key="8">
    <source>
    </source>
</evidence>
<evidence type="ECO:0000269" key="9">
    <source>
    </source>
</evidence>
<evidence type="ECO:0000305" key="10"/>
<evidence type="ECO:0000312" key="11">
    <source>
        <dbReference type="EMBL" id="AAH57172.1"/>
    </source>
</evidence>
<evidence type="ECO:0000312" key="12">
    <source>
        <dbReference type="EMBL" id="AAL82480.1"/>
    </source>
</evidence>
<evidence type="ECO:0000312" key="13">
    <source>
        <dbReference type="EMBL" id="BAB31280.1"/>
    </source>
</evidence>
<evidence type="ECO:0000312" key="14">
    <source>
        <dbReference type="EMBL" id="CAM21365.1"/>
    </source>
</evidence>
<evidence type="ECO:0000312" key="15">
    <source>
        <dbReference type="MGI" id="MGI:1914059"/>
    </source>
</evidence>
<evidence type="ECO:0007744" key="16">
    <source>
    </source>
</evidence>
<gene>
    <name evidence="11 15" type="primary">Krt20</name>
</gene>
<reference evidence="10 12" key="1">
    <citation type="journal article" date="2003" name="Mol. Biol. Cell">
        <title>Keratin 20 helps maintain intermediate filament organization in intestinal epithelia.</title>
        <authorList>
            <person name="Zhou Q."/>
            <person name="Toivola D.M."/>
            <person name="Feng N."/>
            <person name="Greenberg H.B."/>
            <person name="Franke W.W."/>
            <person name="Omary M.B."/>
        </authorList>
    </citation>
    <scope>NUCLEOTIDE SEQUENCE [MRNA]</scope>
    <scope>FUNCTION</scope>
    <scope>INTERACTION WITH KRT8</scope>
    <scope>TISSUE SPECIFICITY</scope>
</reference>
<reference evidence="13" key="2">
    <citation type="journal article" date="2005" name="Science">
        <title>The transcriptional landscape of the mammalian genome.</title>
        <authorList>
            <person name="Carninci P."/>
            <person name="Kasukawa T."/>
            <person name="Katayama S."/>
            <person name="Gough J."/>
            <person name="Frith M.C."/>
            <person name="Maeda N."/>
            <person name="Oyama R."/>
            <person name="Ravasi T."/>
            <person name="Lenhard B."/>
            <person name="Wells C."/>
            <person name="Kodzius R."/>
            <person name="Shimokawa K."/>
            <person name="Bajic V.B."/>
            <person name="Brenner S.E."/>
            <person name="Batalov S."/>
            <person name="Forrest A.R."/>
            <person name="Zavolan M."/>
            <person name="Davis M.J."/>
            <person name="Wilming L.G."/>
            <person name="Aidinis V."/>
            <person name="Allen J.E."/>
            <person name="Ambesi-Impiombato A."/>
            <person name="Apweiler R."/>
            <person name="Aturaliya R.N."/>
            <person name="Bailey T.L."/>
            <person name="Bansal M."/>
            <person name="Baxter L."/>
            <person name="Beisel K.W."/>
            <person name="Bersano T."/>
            <person name="Bono H."/>
            <person name="Chalk A.M."/>
            <person name="Chiu K.P."/>
            <person name="Choudhary V."/>
            <person name="Christoffels A."/>
            <person name="Clutterbuck D.R."/>
            <person name="Crowe M.L."/>
            <person name="Dalla E."/>
            <person name="Dalrymple B.P."/>
            <person name="de Bono B."/>
            <person name="Della Gatta G."/>
            <person name="di Bernardo D."/>
            <person name="Down T."/>
            <person name="Engstrom P."/>
            <person name="Fagiolini M."/>
            <person name="Faulkner G."/>
            <person name="Fletcher C.F."/>
            <person name="Fukushima T."/>
            <person name="Furuno M."/>
            <person name="Futaki S."/>
            <person name="Gariboldi M."/>
            <person name="Georgii-Hemming P."/>
            <person name="Gingeras T.R."/>
            <person name="Gojobori T."/>
            <person name="Green R.E."/>
            <person name="Gustincich S."/>
            <person name="Harbers M."/>
            <person name="Hayashi Y."/>
            <person name="Hensch T.K."/>
            <person name="Hirokawa N."/>
            <person name="Hill D."/>
            <person name="Huminiecki L."/>
            <person name="Iacono M."/>
            <person name="Ikeo K."/>
            <person name="Iwama A."/>
            <person name="Ishikawa T."/>
            <person name="Jakt M."/>
            <person name="Kanapin A."/>
            <person name="Katoh M."/>
            <person name="Kawasawa Y."/>
            <person name="Kelso J."/>
            <person name="Kitamura H."/>
            <person name="Kitano H."/>
            <person name="Kollias G."/>
            <person name="Krishnan S.P."/>
            <person name="Kruger A."/>
            <person name="Kummerfeld S.K."/>
            <person name="Kurochkin I.V."/>
            <person name="Lareau L.F."/>
            <person name="Lazarevic D."/>
            <person name="Lipovich L."/>
            <person name="Liu J."/>
            <person name="Liuni S."/>
            <person name="McWilliam S."/>
            <person name="Madan Babu M."/>
            <person name="Madera M."/>
            <person name="Marchionni L."/>
            <person name="Matsuda H."/>
            <person name="Matsuzawa S."/>
            <person name="Miki H."/>
            <person name="Mignone F."/>
            <person name="Miyake S."/>
            <person name="Morris K."/>
            <person name="Mottagui-Tabar S."/>
            <person name="Mulder N."/>
            <person name="Nakano N."/>
            <person name="Nakauchi H."/>
            <person name="Ng P."/>
            <person name="Nilsson R."/>
            <person name="Nishiguchi S."/>
            <person name="Nishikawa S."/>
            <person name="Nori F."/>
            <person name="Ohara O."/>
            <person name="Okazaki Y."/>
            <person name="Orlando V."/>
            <person name="Pang K.C."/>
            <person name="Pavan W.J."/>
            <person name="Pavesi G."/>
            <person name="Pesole G."/>
            <person name="Petrovsky N."/>
            <person name="Piazza S."/>
            <person name="Reed J."/>
            <person name="Reid J.F."/>
            <person name="Ring B.Z."/>
            <person name="Ringwald M."/>
            <person name="Rost B."/>
            <person name="Ruan Y."/>
            <person name="Salzberg S.L."/>
            <person name="Sandelin A."/>
            <person name="Schneider C."/>
            <person name="Schoenbach C."/>
            <person name="Sekiguchi K."/>
            <person name="Semple C.A."/>
            <person name="Seno S."/>
            <person name="Sessa L."/>
            <person name="Sheng Y."/>
            <person name="Shibata Y."/>
            <person name="Shimada H."/>
            <person name="Shimada K."/>
            <person name="Silva D."/>
            <person name="Sinclair B."/>
            <person name="Sperling S."/>
            <person name="Stupka E."/>
            <person name="Sugiura K."/>
            <person name="Sultana R."/>
            <person name="Takenaka Y."/>
            <person name="Taki K."/>
            <person name="Tammoja K."/>
            <person name="Tan S.L."/>
            <person name="Tang S."/>
            <person name="Taylor M.S."/>
            <person name="Tegner J."/>
            <person name="Teichmann S.A."/>
            <person name="Ueda H.R."/>
            <person name="van Nimwegen E."/>
            <person name="Verardo R."/>
            <person name="Wei C.L."/>
            <person name="Yagi K."/>
            <person name="Yamanishi H."/>
            <person name="Zabarovsky E."/>
            <person name="Zhu S."/>
            <person name="Zimmer A."/>
            <person name="Hide W."/>
            <person name="Bult C."/>
            <person name="Grimmond S.M."/>
            <person name="Teasdale R.D."/>
            <person name="Liu E.T."/>
            <person name="Brusic V."/>
            <person name="Quackenbush J."/>
            <person name="Wahlestedt C."/>
            <person name="Mattick J.S."/>
            <person name="Hume D.A."/>
            <person name="Kai C."/>
            <person name="Sasaki D."/>
            <person name="Tomaru Y."/>
            <person name="Fukuda S."/>
            <person name="Kanamori-Katayama M."/>
            <person name="Suzuki M."/>
            <person name="Aoki J."/>
            <person name="Arakawa T."/>
            <person name="Iida J."/>
            <person name="Imamura K."/>
            <person name="Itoh M."/>
            <person name="Kato T."/>
            <person name="Kawaji H."/>
            <person name="Kawagashira N."/>
            <person name="Kawashima T."/>
            <person name="Kojima M."/>
            <person name="Kondo S."/>
            <person name="Konno H."/>
            <person name="Nakano K."/>
            <person name="Ninomiya N."/>
            <person name="Nishio T."/>
            <person name="Okada M."/>
            <person name="Plessy C."/>
            <person name="Shibata K."/>
            <person name="Shiraki T."/>
            <person name="Suzuki S."/>
            <person name="Tagami M."/>
            <person name="Waki K."/>
            <person name="Watahiki A."/>
            <person name="Okamura-Oho Y."/>
            <person name="Suzuki H."/>
            <person name="Kawai J."/>
            <person name="Hayashizaki Y."/>
        </authorList>
    </citation>
    <scope>NUCLEOTIDE SEQUENCE [LARGE SCALE MRNA]</scope>
    <source>
        <strain evidence="13">C57BL/6J</strain>
        <tissue evidence="13">Colon</tissue>
    </source>
</reference>
<reference key="3">
    <citation type="journal article" date="2009" name="PLoS Biol.">
        <title>Lineage-specific biology revealed by a finished genome assembly of the mouse.</title>
        <authorList>
            <person name="Church D.M."/>
            <person name="Goodstadt L."/>
            <person name="Hillier L.W."/>
            <person name="Zody M.C."/>
            <person name="Goldstein S."/>
            <person name="She X."/>
            <person name="Bult C.J."/>
            <person name="Agarwala R."/>
            <person name="Cherry J.L."/>
            <person name="DiCuccio M."/>
            <person name="Hlavina W."/>
            <person name="Kapustin Y."/>
            <person name="Meric P."/>
            <person name="Maglott D."/>
            <person name="Birtle Z."/>
            <person name="Marques A.C."/>
            <person name="Graves T."/>
            <person name="Zhou S."/>
            <person name="Teague B."/>
            <person name="Potamousis K."/>
            <person name="Churas C."/>
            <person name="Place M."/>
            <person name="Herschleb J."/>
            <person name="Runnheim R."/>
            <person name="Forrest D."/>
            <person name="Amos-Landgraf J."/>
            <person name="Schwartz D.C."/>
            <person name="Cheng Z."/>
            <person name="Lindblad-Toh K."/>
            <person name="Eichler E.E."/>
            <person name="Ponting C.P."/>
        </authorList>
    </citation>
    <scope>NUCLEOTIDE SEQUENCE [LARGE SCALE GENOMIC DNA]</scope>
    <source>
        <strain>C57BL/6J</strain>
    </source>
</reference>
<reference evidence="11" key="4">
    <citation type="journal article" date="2004" name="Genome Res.">
        <title>The status, quality, and expansion of the NIH full-length cDNA project: the Mammalian Gene Collection (MGC).</title>
        <authorList>
            <consortium name="The MGC Project Team"/>
        </authorList>
    </citation>
    <scope>NUCLEOTIDE SEQUENCE [LARGE SCALE MRNA]</scope>
    <source>
        <strain evidence="11">FVB/N</strain>
        <tissue evidence="11">Colon</tissue>
    </source>
</reference>
<reference evidence="14" key="5">
    <citation type="submission" date="2009-01" db="UniProtKB">
        <authorList>
            <person name="Lubec G."/>
            <person name="Sunyer B."/>
            <person name="Chen W.-Q."/>
        </authorList>
    </citation>
    <scope>PROTEIN SEQUENCE OF 79-87 AND 370-378</scope>
    <scope>IDENTIFICATION BY MASS SPECTROMETRY</scope>
    <source>
        <strain>OF1</strain>
        <tissue>Hippocampus</tissue>
    </source>
</reference>
<reference evidence="10" key="6">
    <citation type="journal article" date="2006" name="J. Biol. Chem.">
        <title>Keratin 20 serine 13 phosphorylation is a stress and intestinal goblet cell marker.</title>
        <authorList>
            <person name="Zhou Q."/>
            <person name="Cadrin M."/>
            <person name="Herrmann H."/>
            <person name="Chen C.-H."/>
            <person name="Chalkley R.J."/>
            <person name="Burlingame A.L."/>
            <person name="Omary M.B."/>
        </authorList>
    </citation>
    <scope>FUNCTION</scope>
    <scope>TISSUE SPECIFICITY</scope>
    <scope>PHOSPHORYLATION AT SER-13</scope>
</reference>
<reference key="7">
    <citation type="journal article" date="2007" name="Proc. Natl. Acad. Sci. U.S.A.">
        <title>Large-scale phosphorylation analysis of mouse liver.</title>
        <authorList>
            <person name="Villen J."/>
            <person name="Beausoleil S.A."/>
            <person name="Gerber S.A."/>
            <person name="Gygi S.P."/>
        </authorList>
    </citation>
    <scope>IDENTIFICATION BY MASS SPECTROMETRY [LARGE SCALE ANALYSIS]</scope>
    <source>
        <tissue>Liver</tissue>
    </source>
</reference>
<reference key="8">
    <citation type="journal article" date="2010" name="Cell">
        <title>A tissue-specific atlas of mouse protein phosphorylation and expression.</title>
        <authorList>
            <person name="Huttlin E.L."/>
            <person name="Jedrychowski M.P."/>
            <person name="Elias J.E."/>
            <person name="Goswami T."/>
            <person name="Rad R."/>
            <person name="Beausoleil S.A."/>
            <person name="Villen J."/>
            <person name="Haas W."/>
            <person name="Sowa M.E."/>
            <person name="Gygi S.P."/>
        </authorList>
    </citation>
    <scope>PHOSPHORYLATION [LARGE SCALE ANALYSIS] AT SER-16</scope>
    <scope>IDENTIFICATION BY MASS SPECTROMETRY [LARGE SCALE ANALYSIS]</scope>
    <source>
        <tissue>Kidney</tissue>
        <tissue>Pancreas</tissue>
    </source>
</reference>
<reference key="9">
    <citation type="journal article" date="2010" name="J. Biol. Chem.">
        <title>p38 MAP kinase and MAPKAP kinases MK2/3 cooperatively phosphorylate epithelial keratins.</title>
        <authorList>
            <person name="Menon M.B."/>
            <person name="Schwermann J."/>
            <person name="Singh A.K."/>
            <person name="Franz-Wachtel M."/>
            <person name="Pabst O."/>
            <person name="Seidler U."/>
            <person name="Omary M.B."/>
            <person name="Kotlyarov A."/>
            <person name="Gaestel M."/>
        </authorList>
    </citation>
    <scope>PHOSPHORYLATION AT SER-13 BY MAPKAPK2 AND MAPKAPK3</scope>
</reference>
<keyword id="KW-0053">Apoptosis</keyword>
<keyword id="KW-0175">Coiled coil</keyword>
<keyword id="KW-0903">Direct protein sequencing</keyword>
<keyword id="KW-0403">Intermediate filament</keyword>
<keyword id="KW-0416">Keratin</keyword>
<keyword id="KW-0597">Phosphoprotein</keyword>
<keyword id="KW-1185">Reference proteome</keyword>
<protein>
    <recommendedName>
        <fullName>Keratin, type I cytoskeletal 20</fullName>
    </recommendedName>
    <alternativeName>
        <fullName>Cytokeratin-20</fullName>
        <shortName>CK-20</shortName>
    </alternativeName>
    <alternativeName>
        <fullName>Keratin-20</fullName>
        <shortName>K20</shortName>
    </alternativeName>
</protein>
<accession>Q9D312</accession>
<accession>Q6PG82</accession>
<sequence>MDFSRQSFHRSLSSSSQGPALSMSGSLYRKGTVQRLGAAPSVYGGAGGHGTRISVSKAVMSYGGDLSNGSDLFGGNGKLAMQNLNDRLANYLEKVRSLEQSNSRLEAQIKQWYETNAPSTIRDYSSYYAQIKELQNQVKDAQVQNAQCVLRIDNAKLAAEDFRLKFETERGMRIAVEADLQGLSKVYDNLTLQKTDLEIQIEELNKDLALLKKEHQEEVEVLRRQLGNNVNVEVDAAPGLNLGEIMNEMRQRYEVLAQKNLQEAKEQFERQSQTLQQQVTVNTEELKGFEVQVTELRRTYQNLEIELQSHLSMKESLERNLEDVKARYASQLAAIQEMLSSLEAQLMQIRSDTERQNQEHNILLDIKTRLEQEIATYRRLLEGEDIKTTEYQLSTLEMKDIKKTRKIKTVVEEVVDGKVVSSEVKEIEESV</sequence>
<proteinExistence type="evidence at protein level"/>
<organism>
    <name type="scientific">Mus musculus</name>
    <name type="common">Mouse</name>
    <dbReference type="NCBI Taxonomy" id="10090"/>
    <lineage>
        <taxon>Eukaryota</taxon>
        <taxon>Metazoa</taxon>
        <taxon>Chordata</taxon>
        <taxon>Craniata</taxon>
        <taxon>Vertebrata</taxon>
        <taxon>Euteleostomi</taxon>
        <taxon>Mammalia</taxon>
        <taxon>Eutheria</taxon>
        <taxon>Euarchontoglires</taxon>
        <taxon>Glires</taxon>
        <taxon>Rodentia</taxon>
        <taxon>Myomorpha</taxon>
        <taxon>Muroidea</taxon>
        <taxon>Muridae</taxon>
        <taxon>Murinae</taxon>
        <taxon>Mus</taxon>
        <taxon>Mus</taxon>
    </lineage>
</organism>
<name>K1C20_MOUSE</name>